<feature type="signal peptide" evidence="1">
    <location>
        <begin position="1"/>
        <end position="22"/>
    </location>
</feature>
<feature type="chain" id="PRO_0000016451" description="Interferon gamma">
    <location>
        <begin position="23"/>
        <end position="173"/>
    </location>
</feature>
<feature type="modified residue" description="Pyrrolidone carboxylic acid" evidence="2">
    <location>
        <position position="23"/>
    </location>
</feature>
<feature type="glycosylation site" description="N-linked (GlcNAc...) asparagine" evidence="4">
    <location>
        <position position="38"/>
    </location>
</feature>
<feature type="glycosylation site" description="N-linked (GlcNAc...) asparagine" evidence="4">
    <location>
        <position position="105"/>
    </location>
</feature>
<gene>
    <name type="primary">IFNG</name>
</gene>
<keyword id="KW-0051">Antiviral defense</keyword>
<keyword id="KW-0202">Cytokine</keyword>
<keyword id="KW-0325">Glycoprotein</keyword>
<keyword id="KW-0341">Growth regulation</keyword>
<keyword id="KW-0873">Pyrrolidone carboxylic acid</keyword>
<keyword id="KW-0964">Secreted</keyword>
<keyword id="KW-0732">Signal</keyword>
<organism>
    <name type="scientific">Meriones unguiculatus</name>
    <name type="common">Mongolian jird</name>
    <name type="synonym">Gerbillus unguiculatus</name>
    <dbReference type="NCBI Taxonomy" id="10047"/>
    <lineage>
        <taxon>Eukaryota</taxon>
        <taxon>Metazoa</taxon>
        <taxon>Chordata</taxon>
        <taxon>Craniata</taxon>
        <taxon>Vertebrata</taxon>
        <taxon>Euteleostomi</taxon>
        <taxon>Mammalia</taxon>
        <taxon>Eutheria</taxon>
        <taxon>Euarchontoglires</taxon>
        <taxon>Glires</taxon>
        <taxon>Rodentia</taxon>
        <taxon>Myomorpha</taxon>
        <taxon>Muroidea</taxon>
        <taxon>Muridae</taxon>
        <taxon>Gerbillinae</taxon>
        <taxon>Meriones</taxon>
    </lineage>
</organism>
<proteinExistence type="evidence at transcript level"/>
<protein>
    <recommendedName>
        <fullName>Interferon gamma</fullName>
        <shortName>IFN-gamma</shortName>
    </recommendedName>
</protein>
<sequence>MNATHCILALQLCLLAISGCSSQVPIIEEIENLKRYFNSSNSAVGDSKDVVLHVLRNWQEDGDTKVIDVQIVSFYFKLFEALKGNQAIEKSINAIRADLIANFFNNSEAKYDGFMSIMKIEVNDPQIQSKAINELVKVMGHLSPRVTLRKRKRSRCCFGGGNRLNKNNPASTI</sequence>
<name>IFNG_MERUN</name>
<evidence type="ECO:0000250" key="1"/>
<evidence type="ECO:0000250" key="2">
    <source>
        <dbReference type="UniProtKB" id="P01579"/>
    </source>
</evidence>
<evidence type="ECO:0000250" key="3">
    <source>
        <dbReference type="UniProtKB" id="P01580"/>
    </source>
</evidence>
<evidence type="ECO:0000255" key="4"/>
<evidence type="ECO:0000305" key="5"/>
<dbReference type="EMBL" id="L37782">
    <property type="protein sequence ID" value="AAA65674.1"/>
    <property type="molecule type" value="mRNA"/>
</dbReference>
<dbReference type="SMR" id="Q62574"/>
<dbReference type="GlyCosmos" id="Q62574">
    <property type="glycosylation" value="2 sites, No reported glycans"/>
</dbReference>
<dbReference type="Ensembl" id="ENSMUGT00000004977">
    <property type="protein sequence ID" value="ENSMUGP00000004162"/>
    <property type="gene ID" value="ENSMUGG00000003859"/>
</dbReference>
<dbReference type="OrthoDB" id="9937106at2759"/>
<dbReference type="GO" id="GO:0005615">
    <property type="term" value="C:extracellular space"/>
    <property type="evidence" value="ECO:0007669"/>
    <property type="project" value="UniProtKB-KW"/>
</dbReference>
<dbReference type="GO" id="GO:0005125">
    <property type="term" value="F:cytokine activity"/>
    <property type="evidence" value="ECO:0007669"/>
    <property type="project" value="UniProtKB-KW"/>
</dbReference>
<dbReference type="GO" id="GO:0005133">
    <property type="term" value="F:type II interferon receptor binding"/>
    <property type="evidence" value="ECO:0007669"/>
    <property type="project" value="InterPro"/>
</dbReference>
<dbReference type="GO" id="GO:0002250">
    <property type="term" value="P:adaptive immune response"/>
    <property type="evidence" value="ECO:0007669"/>
    <property type="project" value="TreeGrafter"/>
</dbReference>
<dbReference type="GO" id="GO:0051607">
    <property type="term" value="P:defense response to virus"/>
    <property type="evidence" value="ECO:0007669"/>
    <property type="project" value="UniProtKB-KW"/>
</dbReference>
<dbReference type="GO" id="GO:0006959">
    <property type="term" value="P:humoral immune response"/>
    <property type="evidence" value="ECO:0007669"/>
    <property type="project" value="TreeGrafter"/>
</dbReference>
<dbReference type="FunFam" id="1.20.1250.10:FF:000007">
    <property type="entry name" value="Interferon gamma"/>
    <property type="match status" value="1"/>
</dbReference>
<dbReference type="Gene3D" id="1.20.1250.10">
    <property type="match status" value="1"/>
</dbReference>
<dbReference type="InterPro" id="IPR009079">
    <property type="entry name" value="4_helix_cytokine-like_core"/>
</dbReference>
<dbReference type="InterPro" id="IPR002069">
    <property type="entry name" value="Interferon_gamma"/>
</dbReference>
<dbReference type="PANTHER" id="PTHR11419">
    <property type="entry name" value="INTERFERON GAMMA"/>
    <property type="match status" value="1"/>
</dbReference>
<dbReference type="PANTHER" id="PTHR11419:SF0">
    <property type="entry name" value="INTERFERON GAMMA"/>
    <property type="match status" value="1"/>
</dbReference>
<dbReference type="Pfam" id="PF00714">
    <property type="entry name" value="IFN-gamma"/>
    <property type="match status" value="1"/>
</dbReference>
<dbReference type="PIRSF" id="PIRSF001936">
    <property type="entry name" value="IFN-gamma"/>
    <property type="match status" value="1"/>
</dbReference>
<dbReference type="SUPFAM" id="SSF47266">
    <property type="entry name" value="4-helical cytokines"/>
    <property type="match status" value="1"/>
</dbReference>
<comment type="function">
    <text evidence="2 3">Type II interferon produced by immune cells such as T-cells and NK cells that plays crucial roles in antimicrobial, antiviral, and antitumor responses by activating effector immune cells and enhancing antigen presentation. Primarily signals through the JAK-STAT pathway after interaction with its receptor IFNGR1 to affect gene regulation. Upon IFNG binding, IFNGR1 intracellular domain opens out to allow association of downstream signaling components JAK2, JAK1 and STAT1, leading to STAT1 activation, nuclear translocation and transcription of IFNG-regulated genes. Many of the induced genes are transcription factors such as IRF1 that are able to further drive regulation of a next wave of transcription. Plays a role in class I antigen presentation pathway by inducing a replacement of catalytic proteasome subunits with immunoproteasome subunits. In turn, increases the quantity, quality, and repertoire of peptides for class I MHC loading. Increases the efficiency of peptide generation also by inducing the expression of activator PA28 that associates with the proteasome and alters its proteolytic cleavage preference. Up-regulates as well MHC II complexes on the cell surface by promoting expression of several key molecules such as cathepsins B/CTSB, H/CTSH, and L/CTSL (By similarity). Participates in the regulation of hematopoietic stem cells during development and under homeostatic conditions by affecting their development, quiescence, and differentiation (By similarity).</text>
</comment>
<comment type="subunit">
    <text evidence="2">Homodimer. Interacts with IFNGR1 (via extracellular domain); this interaction promotes IFNGR1 dimerization.</text>
</comment>
<comment type="subcellular location">
    <subcellularLocation>
        <location evidence="2">Secreted</location>
    </subcellularLocation>
</comment>
<comment type="tissue specificity">
    <text>Released primarily from activated T lymphocytes.</text>
</comment>
<comment type="similarity">
    <text evidence="5">Belongs to the type II (or gamma) interferon family.</text>
</comment>
<accession>Q62574</accession>
<reference key="1">
    <citation type="submission" date="1995-05" db="EMBL/GenBank/DDBJ databases">
        <title>Full length cDNA isolation of gerbil (Meriones unguiculatus) Th1 and Th2 cell cytokines by PCR method as well as their characterization.</title>
        <authorList>
            <person name="Mai Z."/>
            <person name="Klei T.R."/>
        </authorList>
    </citation>
    <scope>NUCLEOTIDE SEQUENCE [MRNA]</scope>
    <source>
        <tissue>Spleen</tissue>
    </source>
</reference>